<reference key="1">
    <citation type="journal article" date="1999" name="Eur. J. Biochem.">
        <title>Structure and splice products of the human gene encoding sds22, a putative mitotic regulator of protein phosphatase-1.</title>
        <authorList>
            <person name="Ceulemans H."/>
            <person name="Van Eynde A."/>
            <person name="Perez-Callejon E."/>
            <person name="Beullens M."/>
            <person name="Stalmans W."/>
            <person name="Bollen M."/>
        </authorList>
    </citation>
    <scope>NUCLEOTIDE SEQUENCE [GENOMIC DNA]</scope>
    <source>
        <strain>129/SvJ</strain>
    </source>
</reference>
<reference key="2">
    <citation type="submission" date="2000-01" db="EMBL/GenBank/DDBJ databases">
        <title>Cloning, genomic structure and splice products of the mouse PPP1R7 gene, encoding sds22, a putative mitotic regulator of protein phosphatase-1.</title>
        <authorList>
            <person name="Ceulemans H."/>
            <person name="Stalmans W."/>
            <person name="Bollen M."/>
        </authorList>
    </citation>
    <scope>NUCLEOTIDE SEQUENCE [MRNA]</scope>
    <source>
        <strain>129/SvJ</strain>
    </source>
</reference>
<reference key="3">
    <citation type="journal article" date="2005" name="Science">
        <title>The transcriptional landscape of the mammalian genome.</title>
        <authorList>
            <person name="Carninci P."/>
            <person name="Kasukawa T."/>
            <person name="Katayama S."/>
            <person name="Gough J."/>
            <person name="Frith M.C."/>
            <person name="Maeda N."/>
            <person name="Oyama R."/>
            <person name="Ravasi T."/>
            <person name="Lenhard B."/>
            <person name="Wells C."/>
            <person name="Kodzius R."/>
            <person name="Shimokawa K."/>
            <person name="Bajic V.B."/>
            <person name="Brenner S.E."/>
            <person name="Batalov S."/>
            <person name="Forrest A.R."/>
            <person name="Zavolan M."/>
            <person name="Davis M.J."/>
            <person name="Wilming L.G."/>
            <person name="Aidinis V."/>
            <person name="Allen J.E."/>
            <person name="Ambesi-Impiombato A."/>
            <person name="Apweiler R."/>
            <person name="Aturaliya R.N."/>
            <person name="Bailey T.L."/>
            <person name="Bansal M."/>
            <person name="Baxter L."/>
            <person name="Beisel K.W."/>
            <person name="Bersano T."/>
            <person name="Bono H."/>
            <person name="Chalk A.M."/>
            <person name="Chiu K.P."/>
            <person name="Choudhary V."/>
            <person name="Christoffels A."/>
            <person name="Clutterbuck D.R."/>
            <person name="Crowe M.L."/>
            <person name="Dalla E."/>
            <person name="Dalrymple B.P."/>
            <person name="de Bono B."/>
            <person name="Della Gatta G."/>
            <person name="di Bernardo D."/>
            <person name="Down T."/>
            <person name="Engstrom P."/>
            <person name="Fagiolini M."/>
            <person name="Faulkner G."/>
            <person name="Fletcher C.F."/>
            <person name="Fukushima T."/>
            <person name="Furuno M."/>
            <person name="Futaki S."/>
            <person name="Gariboldi M."/>
            <person name="Georgii-Hemming P."/>
            <person name="Gingeras T.R."/>
            <person name="Gojobori T."/>
            <person name="Green R.E."/>
            <person name="Gustincich S."/>
            <person name="Harbers M."/>
            <person name="Hayashi Y."/>
            <person name="Hensch T.K."/>
            <person name="Hirokawa N."/>
            <person name="Hill D."/>
            <person name="Huminiecki L."/>
            <person name="Iacono M."/>
            <person name="Ikeo K."/>
            <person name="Iwama A."/>
            <person name="Ishikawa T."/>
            <person name="Jakt M."/>
            <person name="Kanapin A."/>
            <person name="Katoh M."/>
            <person name="Kawasawa Y."/>
            <person name="Kelso J."/>
            <person name="Kitamura H."/>
            <person name="Kitano H."/>
            <person name="Kollias G."/>
            <person name="Krishnan S.P."/>
            <person name="Kruger A."/>
            <person name="Kummerfeld S.K."/>
            <person name="Kurochkin I.V."/>
            <person name="Lareau L.F."/>
            <person name="Lazarevic D."/>
            <person name="Lipovich L."/>
            <person name="Liu J."/>
            <person name="Liuni S."/>
            <person name="McWilliam S."/>
            <person name="Madan Babu M."/>
            <person name="Madera M."/>
            <person name="Marchionni L."/>
            <person name="Matsuda H."/>
            <person name="Matsuzawa S."/>
            <person name="Miki H."/>
            <person name="Mignone F."/>
            <person name="Miyake S."/>
            <person name="Morris K."/>
            <person name="Mottagui-Tabar S."/>
            <person name="Mulder N."/>
            <person name="Nakano N."/>
            <person name="Nakauchi H."/>
            <person name="Ng P."/>
            <person name="Nilsson R."/>
            <person name="Nishiguchi S."/>
            <person name="Nishikawa S."/>
            <person name="Nori F."/>
            <person name="Ohara O."/>
            <person name="Okazaki Y."/>
            <person name="Orlando V."/>
            <person name="Pang K.C."/>
            <person name="Pavan W.J."/>
            <person name="Pavesi G."/>
            <person name="Pesole G."/>
            <person name="Petrovsky N."/>
            <person name="Piazza S."/>
            <person name="Reed J."/>
            <person name="Reid J.F."/>
            <person name="Ring B.Z."/>
            <person name="Ringwald M."/>
            <person name="Rost B."/>
            <person name="Ruan Y."/>
            <person name="Salzberg S.L."/>
            <person name="Sandelin A."/>
            <person name="Schneider C."/>
            <person name="Schoenbach C."/>
            <person name="Sekiguchi K."/>
            <person name="Semple C.A."/>
            <person name="Seno S."/>
            <person name="Sessa L."/>
            <person name="Sheng Y."/>
            <person name="Shibata Y."/>
            <person name="Shimada H."/>
            <person name="Shimada K."/>
            <person name="Silva D."/>
            <person name="Sinclair B."/>
            <person name="Sperling S."/>
            <person name="Stupka E."/>
            <person name="Sugiura K."/>
            <person name="Sultana R."/>
            <person name="Takenaka Y."/>
            <person name="Taki K."/>
            <person name="Tammoja K."/>
            <person name="Tan S.L."/>
            <person name="Tang S."/>
            <person name="Taylor M.S."/>
            <person name="Tegner J."/>
            <person name="Teichmann S.A."/>
            <person name="Ueda H.R."/>
            <person name="van Nimwegen E."/>
            <person name="Verardo R."/>
            <person name="Wei C.L."/>
            <person name="Yagi K."/>
            <person name="Yamanishi H."/>
            <person name="Zabarovsky E."/>
            <person name="Zhu S."/>
            <person name="Zimmer A."/>
            <person name="Hide W."/>
            <person name="Bult C."/>
            <person name="Grimmond S.M."/>
            <person name="Teasdale R.D."/>
            <person name="Liu E.T."/>
            <person name="Brusic V."/>
            <person name="Quackenbush J."/>
            <person name="Wahlestedt C."/>
            <person name="Mattick J.S."/>
            <person name="Hume D.A."/>
            <person name="Kai C."/>
            <person name="Sasaki D."/>
            <person name="Tomaru Y."/>
            <person name="Fukuda S."/>
            <person name="Kanamori-Katayama M."/>
            <person name="Suzuki M."/>
            <person name="Aoki J."/>
            <person name="Arakawa T."/>
            <person name="Iida J."/>
            <person name="Imamura K."/>
            <person name="Itoh M."/>
            <person name="Kato T."/>
            <person name="Kawaji H."/>
            <person name="Kawagashira N."/>
            <person name="Kawashima T."/>
            <person name="Kojima M."/>
            <person name="Kondo S."/>
            <person name="Konno H."/>
            <person name="Nakano K."/>
            <person name="Ninomiya N."/>
            <person name="Nishio T."/>
            <person name="Okada M."/>
            <person name="Plessy C."/>
            <person name="Shibata K."/>
            <person name="Shiraki T."/>
            <person name="Suzuki S."/>
            <person name="Tagami M."/>
            <person name="Waki K."/>
            <person name="Watahiki A."/>
            <person name="Okamura-Oho Y."/>
            <person name="Suzuki H."/>
            <person name="Kawai J."/>
            <person name="Hayashizaki Y."/>
        </authorList>
    </citation>
    <scope>NUCLEOTIDE SEQUENCE [LARGE SCALE MRNA]</scope>
    <source>
        <tissue>Mammary gland</tissue>
    </source>
</reference>
<reference key="4">
    <citation type="journal article" date="2004" name="Genome Res.">
        <title>The status, quality, and expansion of the NIH full-length cDNA project: the Mammalian Gene Collection (MGC).</title>
        <authorList>
            <consortium name="The MGC Project Team"/>
        </authorList>
    </citation>
    <scope>NUCLEOTIDE SEQUENCE [LARGE SCALE MRNA]</scope>
    <source>
        <strain>FVB/N</strain>
        <tissue>Kidney</tissue>
    </source>
</reference>
<reference key="5">
    <citation type="submission" date="2007-07" db="UniProtKB">
        <authorList>
            <person name="Lubec G."/>
            <person name="Klug S."/>
            <person name="Yang J.W."/>
            <person name="Zigmond M."/>
        </authorList>
    </citation>
    <scope>PROTEIN SEQUENCE OF 224-242 AND 246-256</scope>
    <scope>IDENTIFICATION BY MASS SPECTROMETRY</scope>
    <source>
        <tissue>Brain</tissue>
        <tissue>Hippocampus</tissue>
    </source>
</reference>
<reference key="6">
    <citation type="journal article" date="2003" name="Mol. Cell. Biol.">
        <title>Targeted disruption of the mouse PAS domain serine/threonine kinase PASKIN.</title>
        <authorList>
            <person name="Katschinski D.M."/>
            <person name="Marti H.H."/>
            <person name="Wagner K.F."/>
            <person name="Shibata J."/>
            <person name="Eckhardt K."/>
            <person name="Martin F."/>
            <person name="Depping R."/>
            <person name="Paasch U."/>
            <person name="Gassmann M."/>
            <person name="Ledermann B."/>
            <person name="Desbaillets I."/>
            <person name="Wenger R.H."/>
        </authorList>
    </citation>
    <scope>TISSUE SPECIFICITY</scope>
</reference>
<reference key="7">
    <citation type="journal article" date="2010" name="Cell">
        <title>A tissue-specific atlas of mouse protein phosphorylation and expression.</title>
        <authorList>
            <person name="Huttlin E.L."/>
            <person name="Jedrychowski M.P."/>
            <person name="Elias J.E."/>
            <person name="Goswami T."/>
            <person name="Rad R."/>
            <person name="Beausoleil S.A."/>
            <person name="Villen J."/>
            <person name="Haas W."/>
            <person name="Sowa M.E."/>
            <person name="Gygi S.P."/>
        </authorList>
    </citation>
    <scope>PHOSPHORYLATION [LARGE SCALE ANALYSIS] AT SER-24; SER-27; SER-45 AND SER-323</scope>
    <scope>IDENTIFICATION BY MASS SPECTROMETRY [LARGE SCALE ANALYSIS]</scope>
    <source>
        <tissue>Brain</tissue>
        <tissue>Brown adipose tissue</tissue>
        <tissue>Heart</tissue>
        <tissue>Kidney</tissue>
        <tissue>Liver</tissue>
        <tissue>Lung</tissue>
        <tissue>Pancreas</tissue>
        <tissue>Spleen</tissue>
        <tissue>Testis</tissue>
    </source>
</reference>
<accession>Q3UM45</accession>
<accession>Q9CV31</accession>
<accession>Q9Z105</accession>
<sequence length="361" mass="41292">MAAERGAGQQQSQEMMEVDRRVESEESGDEEGKKHGGGGIVANLSEQSLKDGVDRGAEDPEEEHELAVDMETINLDRDAEDVDLTHYRIGKIEGLEVLKKVKSLCLRQNLIKCIENLEELQSLRELDLYDNQIKKIENLEALTELEVLDISFNMLRNIEGIDKLTQLKKLFLVNNKINKIENISNLHQLQMLELGSNRIRAIENIDTLTNLESLFLGKNKITKLQNLDALTNLTVLSVQSNRLAKIEGLQSLVNLRELYLSNNGIEVIEGLENNNKLTMLDIASNRIKKIENISHLTELQEFWMNDNLLESWSDLDELKGARSLETVYLERNPLQKDPQYRRKVMLALPSVRQIDATYVRF</sequence>
<feature type="initiator methionine" description="Removed" evidence="2">
    <location>
        <position position="1"/>
    </location>
</feature>
<feature type="chain" id="PRO_0000239614" description="Protein phosphatase 1 regulatory subunit 7">
    <location>
        <begin position="2"/>
        <end position="361"/>
    </location>
</feature>
<feature type="repeat" description="LRR 1">
    <location>
        <begin position="78"/>
        <end position="99"/>
    </location>
</feature>
<feature type="repeat" description="LRR 2">
    <location>
        <begin position="100"/>
        <end position="121"/>
    </location>
</feature>
<feature type="repeat" description="LRR 3">
    <location>
        <begin position="122"/>
        <end position="143"/>
    </location>
</feature>
<feature type="repeat" description="LRR 4">
    <location>
        <begin position="144"/>
        <end position="165"/>
    </location>
</feature>
<feature type="repeat" description="LRR 5">
    <location>
        <begin position="166"/>
        <end position="187"/>
    </location>
</feature>
<feature type="repeat" description="LRR 6">
    <location>
        <begin position="188"/>
        <end position="209"/>
    </location>
</feature>
<feature type="repeat" description="LRR 7">
    <location>
        <begin position="210"/>
        <end position="231"/>
    </location>
</feature>
<feature type="repeat" description="LRR 8">
    <location>
        <begin position="232"/>
        <end position="253"/>
    </location>
</feature>
<feature type="repeat" description="LRR 9">
    <location>
        <begin position="254"/>
        <end position="275"/>
    </location>
</feature>
<feature type="repeat" description="LRR 10">
    <location>
        <begin position="276"/>
        <end position="297"/>
    </location>
</feature>
<feature type="repeat" description="LRR 11">
    <location>
        <begin position="298"/>
        <end position="319"/>
    </location>
</feature>
<feature type="domain" description="LRRCT">
    <location>
        <begin position="332"/>
        <end position="361"/>
    </location>
</feature>
<feature type="region of interest" description="Disordered" evidence="3">
    <location>
        <begin position="1"/>
        <end position="64"/>
    </location>
</feature>
<feature type="compositionally biased region" description="Basic and acidic residues" evidence="3">
    <location>
        <begin position="17"/>
        <end position="34"/>
    </location>
</feature>
<feature type="compositionally biased region" description="Basic and acidic residues" evidence="3">
    <location>
        <begin position="48"/>
        <end position="58"/>
    </location>
</feature>
<feature type="modified residue" description="N-acetylalanine" evidence="2">
    <location>
        <position position="2"/>
    </location>
</feature>
<feature type="modified residue" description="Phosphoserine" evidence="2">
    <location>
        <position position="12"/>
    </location>
</feature>
<feature type="modified residue" description="Phosphoserine" evidence="6">
    <location>
        <position position="24"/>
    </location>
</feature>
<feature type="modified residue" description="Phosphoserine" evidence="6">
    <location>
        <position position="27"/>
    </location>
</feature>
<feature type="modified residue" description="Phosphoserine" evidence="6">
    <location>
        <position position="45"/>
    </location>
</feature>
<feature type="modified residue" description="Phosphoserine" evidence="2">
    <location>
        <position position="48"/>
    </location>
</feature>
<feature type="modified residue" description="Phosphoserine" evidence="6">
    <location>
        <position position="323"/>
    </location>
</feature>
<feature type="sequence conflict" description="In Ref. 3; BAE26253." evidence="5" ref="3">
    <original>G</original>
    <variation>S</variation>
    <location>
        <position position="39"/>
    </location>
</feature>
<feature type="sequence conflict" description="In Ref. 3; BAE26253." evidence="5" ref="3">
    <original>D</original>
    <variation>E</variation>
    <location>
        <position position="54"/>
    </location>
</feature>
<feature type="sequence conflict" description="In Ref. 3; BAE26253." evidence="5" ref="3">
    <original>V</original>
    <variation>L</variation>
    <location>
        <position position="97"/>
    </location>
</feature>
<keyword id="KW-0007">Acetylation</keyword>
<keyword id="KW-0903">Direct protein sequencing</keyword>
<keyword id="KW-0433">Leucine-rich repeat</keyword>
<keyword id="KW-0539">Nucleus</keyword>
<keyword id="KW-0597">Phosphoprotein</keyword>
<keyword id="KW-1185">Reference proteome</keyword>
<keyword id="KW-0677">Repeat</keyword>
<proteinExistence type="evidence at protein level"/>
<comment type="function">
    <text evidence="1">Regulatory subunit of protein phosphatase 1.</text>
</comment>
<comment type="subunit">
    <text evidence="1">Interacts with PPP1CA, PPP1CB and PPP1CC/PPP1G.</text>
</comment>
<comment type="interaction">
    <interactant intactId="EBI-8318179">
        <id>Q3UM45</id>
    </interactant>
    <interactant intactId="EBI-357187">
        <id>P62137</id>
        <label>Ppp1ca</label>
    </interactant>
    <organismsDiffer>false</organismsDiffer>
    <experiments>3</experiments>
</comment>
<comment type="subcellular location">
    <subcellularLocation>
        <location evidence="1">Nucleus</location>
    </subcellularLocation>
</comment>
<comment type="tissue specificity">
    <text evidence="4">Widely expressed with high level in testis. Expression increases during puberty. Expressed in spermatids and probably also in spermatozoa.</text>
</comment>
<comment type="similarity">
    <text evidence="5">Belongs to the SDS22 family.</text>
</comment>
<comment type="sequence caution" evidence="5">
    <conflict type="frameshift">
        <sequence resource="EMBL-CDS" id="BAB26554"/>
    </conflict>
</comment>
<evidence type="ECO:0000250" key="1"/>
<evidence type="ECO:0000250" key="2">
    <source>
        <dbReference type="UniProtKB" id="Q15435"/>
    </source>
</evidence>
<evidence type="ECO:0000256" key="3">
    <source>
        <dbReference type="SAM" id="MobiDB-lite"/>
    </source>
</evidence>
<evidence type="ECO:0000269" key="4">
    <source>
    </source>
</evidence>
<evidence type="ECO:0000305" key="5"/>
<evidence type="ECO:0007744" key="6">
    <source>
    </source>
</evidence>
<name>PP1R7_MOUSE</name>
<organism>
    <name type="scientific">Mus musculus</name>
    <name type="common">Mouse</name>
    <dbReference type="NCBI Taxonomy" id="10090"/>
    <lineage>
        <taxon>Eukaryota</taxon>
        <taxon>Metazoa</taxon>
        <taxon>Chordata</taxon>
        <taxon>Craniata</taxon>
        <taxon>Vertebrata</taxon>
        <taxon>Euteleostomi</taxon>
        <taxon>Mammalia</taxon>
        <taxon>Eutheria</taxon>
        <taxon>Euarchontoglires</taxon>
        <taxon>Glires</taxon>
        <taxon>Rodentia</taxon>
        <taxon>Myomorpha</taxon>
        <taxon>Muroidea</taxon>
        <taxon>Muridae</taxon>
        <taxon>Murinae</taxon>
        <taxon>Mus</taxon>
        <taxon>Mus</taxon>
    </lineage>
</organism>
<gene>
    <name type="primary">Ppp1r7</name>
    <name type="synonym">Sds22</name>
</gene>
<dbReference type="EMBL" id="AF067129">
    <property type="protein sequence ID" value="AAK08624.1"/>
    <property type="molecule type" value="Genomic_DNA"/>
</dbReference>
<dbReference type="EMBL" id="AF222867">
    <property type="protein sequence ID" value="AAK00624.1"/>
    <property type="molecule type" value="mRNA"/>
</dbReference>
<dbReference type="EMBL" id="AK009870">
    <property type="protein sequence ID" value="BAB26554.1"/>
    <property type="status" value="ALT_FRAME"/>
    <property type="molecule type" value="mRNA"/>
</dbReference>
<dbReference type="EMBL" id="AK145136">
    <property type="protein sequence ID" value="BAE26253.1"/>
    <property type="molecule type" value="mRNA"/>
</dbReference>
<dbReference type="EMBL" id="AK162517">
    <property type="protein sequence ID" value="BAE36954.1"/>
    <property type="molecule type" value="mRNA"/>
</dbReference>
<dbReference type="EMBL" id="BC013524">
    <property type="protein sequence ID" value="AAH13524.1"/>
    <property type="molecule type" value="mRNA"/>
</dbReference>
<dbReference type="CCDS" id="CCDS15187.1"/>
<dbReference type="RefSeq" id="NP_075689.1">
    <property type="nucleotide sequence ID" value="NM_023200.3"/>
</dbReference>
<dbReference type="SMR" id="Q3UM45"/>
<dbReference type="BioGRID" id="211432">
    <property type="interactions" value="25"/>
</dbReference>
<dbReference type="FunCoup" id="Q3UM45">
    <property type="interactions" value="903"/>
</dbReference>
<dbReference type="IntAct" id="Q3UM45">
    <property type="interactions" value="7"/>
</dbReference>
<dbReference type="STRING" id="10090.ENSMUSP00000027494"/>
<dbReference type="GlyGen" id="Q3UM45">
    <property type="glycosylation" value="3 sites, 2 N-linked glycans (2 sites), 1 O-linked glycan (1 site)"/>
</dbReference>
<dbReference type="iPTMnet" id="Q3UM45"/>
<dbReference type="MetOSite" id="Q3UM45"/>
<dbReference type="PhosphoSitePlus" id="Q3UM45"/>
<dbReference type="SwissPalm" id="Q3UM45"/>
<dbReference type="REPRODUCTION-2DPAGE" id="Q3UM45"/>
<dbReference type="CPTAC" id="non-CPTAC-3864"/>
<dbReference type="jPOST" id="Q3UM45"/>
<dbReference type="PaxDb" id="10090-ENSMUSP00000027494"/>
<dbReference type="PeptideAtlas" id="Q3UM45"/>
<dbReference type="ProteomicsDB" id="291642"/>
<dbReference type="Pumba" id="Q3UM45"/>
<dbReference type="DNASU" id="66385"/>
<dbReference type="Ensembl" id="ENSMUST00000027494.11">
    <property type="protein sequence ID" value="ENSMUSP00000027494.5"/>
    <property type="gene ID" value="ENSMUSG00000026275.14"/>
</dbReference>
<dbReference type="GeneID" id="66385"/>
<dbReference type="KEGG" id="mmu:66385"/>
<dbReference type="UCSC" id="uc007cdv.1">
    <property type="organism name" value="mouse"/>
</dbReference>
<dbReference type="AGR" id="MGI:1913635"/>
<dbReference type="CTD" id="5510"/>
<dbReference type="MGI" id="MGI:1913635">
    <property type="gene designation" value="Ppp1r7"/>
</dbReference>
<dbReference type="VEuPathDB" id="HostDB:ENSMUSG00000026275"/>
<dbReference type="eggNOG" id="KOG0531">
    <property type="taxonomic scope" value="Eukaryota"/>
</dbReference>
<dbReference type="GeneTree" id="ENSGT00940000162473"/>
<dbReference type="HOGENOM" id="CLU_044236_1_1_1"/>
<dbReference type="InParanoid" id="Q3UM45"/>
<dbReference type="OMA" id="EVWASYN"/>
<dbReference type="OrthoDB" id="7451790at2759"/>
<dbReference type="PhylomeDB" id="Q3UM45"/>
<dbReference type="TreeFam" id="TF105538"/>
<dbReference type="BioGRID-ORCS" id="66385">
    <property type="hits" value="22 hits in 75 CRISPR screens"/>
</dbReference>
<dbReference type="ChiTaRS" id="Ppp1r7">
    <property type="organism name" value="mouse"/>
</dbReference>
<dbReference type="PRO" id="PR:Q3UM45"/>
<dbReference type="Proteomes" id="UP000000589">
    <property type="component" value="Chromosome 1"/>
</dbReference>
<dbReference type="RNAct" id="Q3UM45">
    <property type="molecule type" value="protein"/>
</dbReference>
<dbReference type="Bgee" id="ENSMUSG00000026275">
    <property type="expression patterns" value="Expressed in embryonic post-anal tail and 271 other cell types or tissues"/>
</dbReference>
<dbReference type="ExpressionAtlas" id="Q3UM45">
    <property type="expression patterns" value="baseline and differential"/>
</dbReference>
<dbReference type="GO" id="GO:0005694">
    <property type="term" value="C:chromosome"/>
    <property type="evidence" value="ECO:0000266"/>
    <property type="project" value="MGI"/>
</dbReference>
<dbReference type="GO" id="GO:0005634">
    <property type="term" value="C:nucleus"/>
    <property type="evidence" value="ECO:0007669"/>
    <property type="project" value="UniProtKB-SubCell"/>
</dbReference>
<dbReference type="GO" id="GO:0019888">
    <property type="term" value="F:protein phosphatase regulator activity"/>
    <property type="evidence" value="ECO:0000266"/>
    <property type="project" value="MGI"/>
</dbReference>
<dbReference type="GO" id="GO:0007059">
    <property type="term" value="P:chromosome segregation"/>
    <property type="evidence" value="ECO:0000314"/>
    <property type="project" value="MGI"/>
</dbReference>
<dbReference type="FunFam" id="3.80.10.10:FF:000055">
    <property type="entry name" value="Protein phosphatase 1 regulatory subunit 7"/>
    <property type="match status" value="1"/>
</dbReference>
<dbReference type="FunFam" id="3.80.10.10:FF:000127">
    <property type="entry name" value="protein phosphatase 1 regulatory subunit 7 isoform X2"/>
    <property type="match status" value="1"/>
</dbReference>
<dbReference type="Gene3D" id="3.80.10.10">
    <property type="entry name" value="Ribonuclease Inhibitor"/>
    <property type="match status" value="2"/>
</dbReference>
<dbReference type="InterPro" id="IPR050576">
    <property type="entry name" value="Cilia_flagella_integrity"/>
</dbReference>
<dbReference type="InterPro" id="IPR001611">
    <property type="entry name" value="Leu-rich_rpt"/>
</dbReference>
<dbReference type="InterPro" id="IPR025875">
    <property type="entry name" value="Leu-rich_rpt_4"/>
</dbReference>
<dbReference type="InterPro" id="IPR003591">
    <property type="entry name" value="Leu-rich_rpt_typical-subtyp"/>
</dbReference>
<dbReference type="InterPro" id="IPR032675">
    <property type="entry name" value="LRR_dom_sf"/>
</dbReference>
<dbReference type="InterPro" id="IPR003603">
    <property type="entry name" value="U2A'_phosphoprotein32A_C"/>
</dbReference>
<dbReference type="PANTHER" id="PTHR45973:SF23">
    <property type="entry name" value="PROTEIN PHOSPHATASE 1 REGULATORY SUBUNIT 7"/>
    <property type="match status" value="1"/>
</dbReference>
<dbReference type="PANTHER" id="PTHR45973">
    <property type="entry name" value="PROTEIN PHOSPHATASE 1 REGULATORY SUBUNIT SDS22-RELATED"/>
    <property type="match status" value="1"/>
</dbReference>
<dbReference type="Pfam" id="PF12799">
    <property type="entry name" value="LRR_4"/>
    <property type="match status" value="3"/>
</dbReference>
<dbReference type="Pfam" id="PF14580">
    <property type="entry name" value="LRR_9"/>
    <property type="match status" value="1"/>
</dbReference>
<dbReference type="SMART" id="SM00365">
    <property type="entry name" value="LRR_SD22"/>
    <property type="match status" value="10"/>
</dbReference>
<dbReference type="SMART" id="SM00369">
    <property type="entry name" value="LRR_TYP"/>
    <property type="match status" value="7"/>
</dbReference>
<dbReference type="SMART" id="SM00446">
    <property type="entry name" value="LRRcap"/>
    <property type="match status" value="1"/>
</dbReference>
<dbReference type="SUPFAM" id="SSF52058">
    <property type="entry name" value="L domain-like"/>
    <property type="match status" value="1"/>
</dbReference>
<dbReference type="PROSITE" id="PS51450">
    <property type="entry name" value="LRR"/>
    <property type="match status" value="12"/>
</dbReference>
<protein>
    <recommendedName>
        <fullName>Protein phosphatase 1 regulatory subunit 7</fullName>
    </recommendedName>
    <alternativeName>
        <fullName>Protein phosphatase 1 regulatory subunit 22</fullName>
    </alternativeName>
</protein>